<gene>
    <name type="primary">Lyrm7</name>
    <name type="synonym">MZM1L</name>
</gene>
<proteinExistence type="inferred from homology"/>
<sequence length="104" mass="12047">MGQPAKVLQLFKTLHRTRQQVFKNDKRALEAARVKINEEFKKHKNETSPEKIKEMMKLGSDVELLLRTAVIQGIHTDHDTLQLVPRKDLLTENVPYCDAPTQKQ</sequence>
<name>LYRM7_MOUSE</name>
<keyword id="KW-0143">Chaperone</keyword>
<keyword id="KW-0496">Mitochondrion</keyword>
<keyword id="KW-0597">Phosphoprotein</keyword>
<keyword id="KW-1185">Reference proteome</keyword>
<dbReference type="EMBL" id="AK006294">
    <property type="protein sequence ID" value="BAB24512.1"/>
    <property type="status" value="ALT_INIT"/>
    <property type="molecule type" value="mRNA"/>
</dbReference>
<dbReference type="EMBL" id="AL954817">
    <property type="status" value="NOT_ANNOTATED_CDS"/>
    <property type="molecule type" value="Genomic_DNA"/>
</dbReference>
<dbReference type="EMBL" id="BC139406">
    <property type="protein sequence ID" value="AAI39407.1"/>
    <property type="molecule type" value="mRNA"/>
</dbReference>
<dbReference type="CCDS" id="CCDS36154.2"/>
<dbReference type="RefSeq" id="NP_083603.4">
    <property type="nucleotide sequence ID" value="NM_029327.5"/>
</dbReference>
<dbReference type="SMR" id="Q9DA03"/>
<dbReference type="BioGRID" id="217552">
    <property type="interactions" value="2"/>
</dbReference>
<dbReference type="FunCoup" id="Q9DA03">
    <property type="interactions" value="930"/>
</dbReference>
<dbReference type="STRING" id="10090.ENSMUSP00000120778"/>
<dbReference type="iPTMnet" id="Q9DA03"/>
<dbReference type="PhosphoSitePlus" id="Q9DA03"/>
<dbReference type="PaxDb" id="10090-ENSMUSP00000120778"/>
<dbReference type="ProteomicsDB" id="287280"/>
<dbReference type="Pumba" id="Q9DA03"/>
<dbReference type="Antibodypedia" id="63813">
    <property type="antibodies" value="11 antibodies from 9 providers"/>
</dbReference>
<dbReference type="Ensembl" id="ENSMUST00000144164.9">
    <property type="protein sequence ID" value="ENSMUSP00000120778.2"/>
    <property type="gene ID" value="ENSMUSG00000020268.15"/>
</dbReference>
<dbReference type="Ensembl" id="ENSMUST00000148070.8">
    <property type="protein sequence ID" value="ENSMUSP00000118373.2"/>
    <property type="gene ID" value="ENSMUSG00000020268.15"/>
</dbReference>
<dbReference type="GeneID" id="75530"/>
<dbReference type="KEGG" id="mmu:75530"/>
<dbReference type="UCSC" id="uc011xuy.1">
    <property type="organism name" value="mouse"/>
</dbReference>
<dbReference type="AGR" id="MGI:1922780"/>
<dbReference type="CTD" id="90624"/>
<dbReference type="MGI" id="MGI:1922780">
    <property type="gene designation" value="Lyrm7"/>
</dbReference>
<dbReference type="VEuPathDB" id="HostDB:ENSMUSG00000020268"/>
<dbReference type="eggNOG" id="ENOG502S5FU">
    <property type="taxonomic scope" value="Eukaryota"/>
</dbReference>
<dbReference type="GeneTree" id="ENSGT00390000017923"/>
<dbReference type="HOGENOM" id="CLU_147114_1_1_1"/>
<dbReference type="InParanoid" id="Q9DA03"/>
<dbReference type="OMA" id="TRQYVFH"/>
<dbReference type="OrthoDB" id="529194at2759"/>
<dbReference type="PhylomeDB" id="Q9DA03"/>
<dbReference type="TreeFam" id="TF324418"/>
<dbReference type="Reactome" id="R-MMU-9865881">
    <property type="pathway name" value="Complex III assembly"/>
</dbReference>
<dbReference type="BioGRID-ORCS" id="75530">
    <property type="hits" value="2 hits in 76 CRISPR screens"/>
</dbReference>
<dbReference type="ChiTaRS" id="Lyrm7">
    <property type="organism name" value="mouse"/>
</dbReference>
<dbReference type="PRO" id="PR:Q9DA03"/>
<dbReference type="Proteomes" id="UP000000589">
    <property type="component" value="Chromosome 11"/>
</dbReference>
<dbReference type="RNAct" id="Q9DA03">
    <property type="molecule type" value="protein"/>
</dbReference>
<dbReference type="Bgee" id="ENSMUSG00000020268">
    <property type="expression patterns" value="Expressed in hindlimb stylopod muscle and 64 other cell types or tissues"/>
</dbReference>
<dbReference type="ExpressionAtlas" id="Q9DA03">
    <property type="expression patterns" value="baseline and differential"/>
</dbReference>
<dbReference type="GO" id="GO:0005759">
    <property type="term" value="C:mitochondrial matrix"/>
    <property type="evidence" value="ECO:0007669"/>
    <property type="project" value="UniProtKB-SubCell"/>
</dbReference>
<dbReference type="GO" id="GO:0031966">
    <property type="term" value="C:mitochondrial membrane"/>
    <property type="evidence" value="ECO:0007669"/>
    <property type="project" value="Ensembl"/>
</dbReference>
<dbReference type="GO" id="GO:0005739">
    <property type="term" value="C:mitochondrion"/>
    <property type="evidence" value="ECO:0007005"/>
    <property type="project" value="MGI"/>
</dbReference>
<dbReference type="GO" id="GO:0045333">
    <property type="term" value="P:cellular respiration"/>
    <property type="evidence" value="ECO:0007669"/>
    <property type="project" value="Ensembl"/>
</dbReference>
<dbReference type="GO" id="GO:0034551">
    <property type="term" value="P:mitochondrial respiratory chain complex III assembly"/>
    <property type="evidence" value="ECO:0007669"/>
    <property type="project" value="Ensembl"/>
</dbReference>
<dbReference type="CDD" id="cd20267">
    <property type="entry name" value="Complex1_LYR_LYRM7"/>
    <property type="match status" value="1"/>
</dbReference>
<dbReference type="InterPro" id="IPR008011">
    <property type="entry name" value="Complex1_LYR_dom"/>
</dbReference>
<dbReference type="InterPro" id="IPR045298">
    <property type="entry name" value="Complex1_LYR_LYRM7"/>
</dbReference>
<dbReference type="InterPro" id="IPR050435">
    <property type="entry name" value="MZM1/LYRM7"/>
</dbReference>
<dbReference type="PANTHER" id="PTHR46749">
    <property type="entry name" value="COMPLEX III ASSEMBLY FACTOR LYRM7"/>
    <property type="match status" value="1"/>
</dbReference>
<dbReference type="PANTHER" id="PTHR46749:SF1">
    <property type="entry name" value="COMPLEX III ASSEMBLY FACTOR LYRM7"/>
    <property type="match status" value="1"/>
</dbReference>
<dbReference type="Pfam" id="PF05347">
    <property type="entry name" value="Complex1_LYR"/>
    <property type="match status" value="1"/>
</dbReference>
<reference key="1">
    <citation type="journal article" date="2005" name="Science">
        <title>The transcriptional landscape of the mammalian genome.</title>
        <authorList>
            <person name="Carninci P."/>
            <person name="Kasukawa T."/>
            <person name="Katayama S."/>
            <person name="Gough J."/>
            <person name="Frith M.C."/>
            <person name="Maeda N."/>
            <person name="Oyama R."/>
            <person name="Ravasi T."/>
            <person name="Lenhard B."/>
            <person name="Wells C."/>
            <person name="Kodzius R."/>
            <person name="Shimokawa K."/>
            <person name="Bajic V.B."/>
            <person name="Brenner S.E."/>
            <person name="Batalov S."/>
            <person name="Forrest A.R."/>
            <person name="Zavolan M."/>
            <person name="Davis M.J."/>
            <person name="Wilming L.G."/>
            <person name="Aidinis V."/>
            <person name="Allen J.E."/>
            <person name="Ambesi-Impiombato A."/>
            <person name="Apweiler R."/>
            <person name="Aturaliya R.N."/>
            <person name="Bailey T.L."/>
            <person name="Bansal M."/>
            <person name="Baxter L."/>
            <person name="Beisel K.W."/>
            <person name="Bersano T."/>
            <person name="Bono H."/>
            <person name="Chalk A.M."/>
            <person name="Chiu K.P."/>
            <person name="Choudhary V."/>
            <person name="Christoffels A."/>
            <person name="Clutterbuck D.R."/>
            <person name="Crowe M.L."/>
            <person name="Dalla E."/>
            <person name="Dalrymple B.P."/>
            <person name="de Bono B."/>
            <person name="Della Gatta G."/>
            <person name="di Bernardo D."/>
            <person name="Down T."/>
            <person name="Engstrom P."/>
            <person name="Fagiolini M."/>
            <person name="Faulkner G."/>
            <person name="Fletcher C.F."/>
            <person name="Fukushima T."/>
            <person name="Furuno M."/>
            <person name="Futaki S."/>
            <person name="Gariboldi M."/>
            <person name="Georgii-Hemming P."/>
            <person name="Gingeras T.R."/>
            <person name="Gojobori T."/>
            <person name="Green R.E."/>
            <person name="Gustincich S."/>
            <person name="Harbers M."/>
            <person name="Hayashi Y."/>
            <person name="Hensch T.K."/>
            <person name="Hirokawa N."/>
            <person name="Hill D."/>
            <person name="Huminiecki L."/>
            <person name="Iacono M."/>
            <person name="Ikeo K."/>
            <person name="Iwama A."/>
            <person name="Ishikawa T."/>
            <person name="Jakt M."/>
            <person name="Kanapin A."/>
            <person name="Katoh M."/>
            <person name="Kawasawa Y."/>
            <person name="Kelso J."/>
            <person name="Kitamura H."/>
            <person name="Kitano H."/>
            <person name="Kollias G."/>
            <person name="Krishnan S.P."/>
            <person name="Kruger A."/>
            <person name="Kummerfeld S.K."/>
            <person name="Kurochkin I.V."/>
            <person name="Lareau L.F."/>
            <person name="Lazarevic D."/>
            <person name="Lipovich L."/>
            <person name="Liu J."/>
            <person name="Liuni S."/>
            <person name="McWilliam S."/>
            <person name="Madan Babu M."/>
            <person name="Madera M."/>
            <person name="Marchionni L."/>
            <person name="Matsuda H."/>
            <person name="Matsuzawa S."/>
            <person name="Miki H."/>
            <person name="Mignone F."/>
            <person name="Miyake S."/>
            <person name="Morris K."/>
            <person name="Mottagui-Tabar S."/>
            <person name="Mulder N."/>
            <person name="Nakano N."/>
            <person name="Nakauchi H."/>
            <person name="Ng P."/>
            <person name="Nilsson R."/>
            <person name="Nishiguchi S."/>
            <person name="Nishikawa S."/>
            <person name="Nori F."/>
            <person name="Ohara O."/>
            <person name="Okazaki Y."/>
            <person name="Orlando V."/>
            <person name="Pang K.C."/>
            <person name="Pavan W.J."/>
            <person name="Pavesi G."/>
            <person name="Pesole G."/>
            <person name="Petrovsky N."/>
            <person name="Piazza S."/>
            <person name="Reed J."/>
            <person name="Reid J.F."/>
            <person name="Ring B.Z."/>
            <person name="Ringwald M."/>
            <person name="Rost B."/>
            <person name="Ruan Y."/>
            <person name="Salzberg S.L."/>
            <person name="Sandelin A."/>
            <person name="Schneider C."/>
            <person name="Schoenbach C."/>
            <person name="Sekiguchi K."/>
            <person name="Semple C.A."/>
            <person name="Seno S."/>
            <person name="Sessa L."/>
            <person name="Sheng Y."/>
            <person name="Shibata Y."/>
            <person name="Shimada H."/>
            <person name="Shimada K."/>
            <person name="Silva D."/>
            <person name="Sinclair B."/>
            <person name="Sperling S."/>
            <person name="Stupka E."/>
            <person name="Sugiura K."/>
            <person name="Sultana R."/>
            <person name="Takenaka Y."/>
            <person name="Taki K."/>
            <person name="Tammoja K."/>
            <person name="Tan S.L."/>
            <person name="Tang S."/>
            <person name="Taylor M.S."/>
            <person name="Tegner J."/>
            <person name="Teichmann S.A."/>
            <person name="Ueda H.R."/>
            <person name="van Nimwegen E."/>
            <person name="Verardo R."/>
            <person name="Wei C.L."/>
            <person name="Yagi K."/>
            <person name="Yamanishi H."/>
            <person name="Zabarovsky E."/>
            <person name="Zhu S."/>
            <person name="Zimmer A."/>
            <person name="Hide W."/>
            <person name="Bult C."/>
            <person name="Grimmond S.M."/>
            <person name="Teasdale R.D."/>
            <person name="Liu E.T."/>
            <person name="Brusic V."/>
            <person name="Quackenbush J."/>
            <person name="Wahlestedt C."/>
            <person name="Mattick J.S."/>
            <person name="Hume D.A."/>
            <person name="Kai C."/>
            <person name="Sasaki D."/>
            <person name="Tomaru Y."/>
            <person name="Fukuda S."/>
            <person name="Kanamori-Katayama M."/>
            <person name="Suzuki M."/>
            <person name="Aoki J."/>
            <person name="Arakawa T."/>
            <person name="Iida J."/>
            <person name="Imamura K."/>
            <person name="Itoh M."/>
            <person name="Kato T."/>
            <person name="Kawaji H."/>
            <person name="Kawagashira N."/>
            <person name="Kawashima T."/>
            <person name="Kojima M."/>
            <person name="Kondo S."/>
            <person name="Konno H."/>
            <person name="Nakano K."/>
            <person name="Ninomiya N."/>
            <person name="Nishio T."/>
            <person name="Okada M."/>
            <person name="Plessy C."/>
            <person name="Shibata K."/>
            <person name="Shiraki T."/>
            <person name="Suzuki S."/>
            <person name="Tagami M."/>
            <person name="Waki K."/>
            <person name="Watahiki A."/>
            <person name="Okamura-Oho Y."/>
            <person name="Suzuki H."/>
            <person name="Kawai J."/>
            <person name="Hayashizaki Y."/>
        </authorList>
    </citation>
    <scope>NUCLEOTIDE SEQUENCE [LARGE SCALE MRNA]</scope>
    <source>
        <strain>C57BL/6J</strain>
        <tissue>Testis</tissue>
    </source>
</reference>
<reference key="2">
    <citation type="journal article" date="2009" name="PLoS Biol.">
        <title>Lineage-specific biology revealed by a finished genome assembly of the mouse.</title>
        <authorList>
            <person name="Church D.M."/>
            <person name="Goodstadt L."/>
            <person name="Hillier L.W."/>
            <person name="Zody M.C."/>
            <person name="Goldstein S."/>
            <person name="She X."/>
            <person name="Bult C.J."/>
            <person name="Agarwala R."/>
            <person name="Cherry J.L."/>
            <person name="DiCuccio M."/>
            <person name="Hlavina W."/>
            <person name="Kapustin Y."/>
            <person name="Meric P."/>
            <person name="Maglott D."/>
            <person name="Birtle Z."/>
            <person name="Marques A.C."/>
            <person name="Graves T."/>
            <person name="Zhou S."/>
            <person name="Teague B."/>
            <person name="Potamousis K."/>
            <person name="Churas C."/>
            <person name="Place M."/>
            <person name="Herschleb J."/>
            <person name="Runnheim R."/>
            <person name="Forrest D."/>
            <person name="Amos-Landgraf J."/>
            <person name="Schwartz D.C."/>
            <person name="Cheng Z."/>
            <person name="Lindblad-Toh K."/>
            <person name="Eichler E.E."/>
            <person name="Ponting C.P."/>
        </authorList>
    </citation>
    <scope>NUCLEOTIDE SEQUENCE [LARGE SCALE GENOMIC DNA]</scope>
    <source>
        <strain>C57BL/6J</strain>
    </source>
</reference>
<reference key="3">
    <citation type="journal article" date="2004" name="Genome Res.">
        <title>The status, quality, and expansion of the NIH full-length cDNA project: the Mammalian Gene Collection (MGC).</title>
        <authorList>
            <consortium name="The MGC Project Team"/>
        </authorList>
    </citation>
    <scope>NUCLEOTIDE SEQUENCE [LARGE SCALE MRNA]</scope>
    <source>
        <tissue>Brain</tissue>
    </source>
</reference>
<comment type="function">
    <text evidence="1">Assembly factor required for Rieske Fe-S protein UQCRFS1 incorporation into the cytochrome b-c1 (CIII) complex. Functions as a chaperone, binding to this subunit within the mitochondrial matrix and stabilizing it prior to its translocation and insertion into the late CIII dimeric intermediate within the mitochondrial inner membrane (By similarity).</text>
</comment>
<comment type="subunit">
    <text evidence="1">Interacts with UQCRFS1.</text>
</comment>
<comment type="subcellular location">
    <subcellularLocation>
        <location evidence="1">Mitochondrion matrix</location>
    </subcellularLocation>
</comment>
<comment type="similarity">
    <text evidence="3">Belongs to the complex I LYR family.</text>
</comment>
<comment type="sequence caution" evidence="3">
    <conflict type="erroneous initiation">
        <sequence resource="EMBL-CDS" id="BAB24512"/>
    </conflict>
</comment>
<evidence type="ECO:0000250" key="1"/>
<evidence type="ECO:0000250" key="2">
    <source>
        <dbReference type="UniProtKB" id="Q5U5X0"/>
    </source>
</evidence>
<evidence type="ECO:0000305" key="3"/>
<protein>
    <recommendedName>
        <fullName>Complex III assembly factor LYRM7</fullName>
    </recommendedName>
    <alternativeName>
        <fullName>LYR motif-containing protein 7</fullName>
    </alternativeName>
</protein>
<feature type="chain" id="PRO_0000251180" description="Complex III assembly factor LYRM7">
    <location>
        <begin position="1"/>
        <end position="104"/>
    </location>
</feature>
<feature type="modified residue" description="Phosphoserine" evidence="2">
    <location>
        <position position="60"/>
    </location>
</feature>
<accession>Q9DA03</accession>
<accession>B7ZDF8</accession>
<organism>
    <name type="scientific">Mus musculus</name>
    <name type="common">Mouse</name>
    <dbReference type="NCBI Taxonomy" id="10090"/>
    <lineage>
        <taxon>Eukaryota</taxon>
        <taxon>Metazoa</taxon>
        <taxon>Chordata</taxon>
        <taxon>Craniata</taxon>
        <taxon>Vertebrata</taxon>
        <taxon>Euteleostomi</taxon>
        <taxon>Mammalia</taxon>
        <taxon>Eutheria</taxon>
        <taxon>Euarchontoglires</taxon>
        <taxon>Glires</taxon>
        <taxon>Rodentia</taxon>
        <taxon>Myomorpha</taxon>
        <taxon>Muroidea</taxon>
        <taxon>Muridae</taxon>
        <taxon>Murinae</taxon>
        <taxon>Mus</taxon>
        <taxon>Mus</taxon>
    </lineage>
</organism>